<organism>
    <name type="scientific">Mus musculus</name>
    <name type="common">Mouse</name>
    <dbReference type="NCBI Taxonomy" id="10090"/>
    <lineage>
        <taxon>Eukaryota</taxon>
        <taxon>Metazoa</taxon>
        <taxon>Chordata</taxon>
        <taxon>Craniata</taxon>
        <taxon>Vertebrata</taxon>
        <taxon>Euteleostomi</taxon>
        <taxon>Mammalia</taxon>
        <taxon>Eutheria</taxon>
        <taxon>Euarchontoglires</taxon>
        <taxon>Glires</taxon>
        <taxon>Rodentia</taxon>
        <taxon>Myomorpha</taxon>
        <taxon>Muroidea</taxon>
        <taxon>Muridae</taxon>
        <taxon>Murinae</taxon>
        <taxon>Mus</taxon>
        <taxon>Mus</taxon>
    </lineage>
</organism>
<reference key="1">
    <citation type="journal article" date="2005" name="Science">
        <title>The transcriptional landscape of the mammalian genome.</title>
        <authorList>
            <person name="Carninci P."/>
            <person name="Kasukawa T."/>
            <person name="Katayama S."/>
            <person name="Gough J."/>
            <person name="Frith M.C."/>
            <person name="Maeda N."/>
            <person name="Oyama R."/>
            <person name="Ravasi T."/>
            <person name="Lenhard B."/>
            <person name="Wells C."/>
            <person name="Kodzius R."/>
            <person name="Shimokawa K."/>
            <person name="Bajic V.B."/>
            <person name="Brenner S.E."/>
            <person name="Batalov S."/>
            <person name="Forrest A.R."/>
            <person name="Zavolan M."/>
            <person name="Davis M.J."/>
            <person name="Wilming L.G."/>
            <person name="Aidinis V."/>
            <person name="Allen J.E."/>
            <person name="Ambesi-Impiombato A."/>
            <person name="Apweiler R."/>
            <person name="Aturaliya R.N."/>
            <person name="Bailey T.L."/>
            <person name="Bansal M."/>
            <person name="Baxter L."/>
            <person name="Beisel K.W."/>
            <person name="Bersano T."/>
            <person name="Bono H."/>
            <person name="Chalk A.M."/>
            <person name="Chiu K.P."/>
            <person name="Choudhary V."/>
            <person name="Christoffels A."/>
            <person name="Clutterbuck D.R."/>
            <person name="Crowe M.L."/>
            <person name="Dalla E."/>
            <person name="Dalrymple B.P."/>
            <person name="de Bono B."/>
            <person name="Della Gatta G."/>
            <person name="di Bernardo D."/>
            <person name="Down T."/>
            <person name="Engstrom P."/>
            <person name="Fagiolini M."/>
            <person name="Faulkner G."/>
            <person name="Fletcher C.F."/>
            <person name="Fukushima T."/>
            <person name="Furuno M."/>
            <person name="Futaki S."/>
            <person name="Gariboldi M."/>
            <person name="Georgii-Hemming P."/>
            <person name="Gingeras T.R."/>
            <person name="Gojobori T."/>
            <person name="Green R.E."/>
            <person name="Gustincich S."/>
            <person name="Harbers M."/>
            <person name="Hayashi Y."/>
            <person name="Hensch T.K."/>
            <person name="Hirokawa N."/>
            <person name="Hill D."/>
            <person name="Huminiecki L."/>
            <person name="Iacono M."/>
            <person name="Ikeo K."/>
            <person name="Iwama A."/>
            <person name="Ishikawa T."/>
            <person name="Jakt M."/>
            <person name="Kanapin A."/>
            <person name="Katoh M."/>
            <person name="Kawasawa Y."/>
            <person name="Kelso J."/>
            <person name="Kitamura H."/>
            <person name="Kitano H."/>
            <person name="Kollias G."/>
            <person name="Krishnan S.P."/>
            <person name="Kruger A."/>
            <person name="Kummerfeld S.K."/>
            <person name="Kurochkin I.V."/>
            <person name="Lareau L.F."/>
            <person name="Lazarevic D."/>
            <person name="Lipovich L."/>
            <person name="Liu J."/>
            <person name="Liuni S."/>
            <person name="McWilliam S."/>
            <person name="Madan Babu M."/>
            <person name="Madera M."/>
            <person name="Marchionni L."/>
            <person name="Matsuda H."/>
            <person name="Matsuzawa S."/>
            <person name="Miki H."/>
            <person name="Mignone F."/>
            <person name="Miyake S."/>
            <person name="Morris K."/>
            <person name="Mottagui-Tabar S."/>
            <person name="Mulder N."/>
            <person name="Nakano N."/>
            <person name="Nakauchi H."/>
            <person name="Ng P."/>
            <person name="Nilsson R."/>
            <person name="Nishiguchi S."/>
            <person name="Nishikawa S."/>
            <person name="Nori F."/>
            <person name="Ohara O."/>
            <person name="Okazaki Y."/>
            <person name="Orlando V."/>
            <person name="Pang K.C."/>
            <person name="Pavan W.J."/>
            <person name="Pavesi G."/>
            <person name="Pesole G."/>
            <person name="Petrovsky N."/>
            <person name="Piazza S."/>
            <person name="Reed J."/>
            <person name="Reid J.F."/>
            <person name="Ring B.Z."/>
            <person name="Ringwald M."/>
            <person name="Rost B."/>
            <person name="Ruan Y."/>
            <person name="Salzberg S.L."/>
            <person name="Sandelin A."/>
            <person name="Schneider C."/>
            <person name="Schoenbach C."/>
            <person name="Sekiguchi K."/>
            <person name="Semple C.A."/>
            <person name="Seno S."/>
            <person name="Sessa L."/>
            <person name="Sheng Y."/>
            <person name="Shibata Y."/>
            <person name="Shimada H."/>
            <person name="Shimada K."/>
            <person name="Silva D."/>
            <person name="Sinclair B."/>
            <person name="Sperling S."/>
            <person name="Stupka E."/>
            <person name="Sugiura K."/>
            <person name="Sultana R."/>
            <person name="Takenaka Y."/>
            <person name="Taki K."/>
            <person name="Tammoja K."/>
            <person name="Tan S.L."/>
            <person name="Tang S."/>
            <person name="Taylor M.S."/>
            <person name="Tegner J."/>
            <person name="Teichmann S.A."/>
            <person name="Ueda H.R."/>
            <person name="van Nimwegen E."/>
            <person name="Verardo R."/>
            <person name="Wei C.L."/>
            <person name="Yagi K."/>
            <person name="Yamanishi H."/>
            <person name="Zabarovsky E."/>
            <person name="Zhu S."/>
            <person name="Zimmer A."/>
            <person name="Hide W."/>
            <person name="Bult C."/>
            <person name="Grimmond S.M."/>
            <person name="Teasdale R.D."/>
            <person name="Liu E.T."/>
            <person name="Brusic V."/>
            <person name="Quackenbush J."/>
            <person name="Wahlestedt C."/>
            <person name="Mattick J.S."/>
            <person name="Hume D.A."/>
            <person name="Kai C."/>
            <person name="Sasaki D."/>
            <person name="Tomaru Y."/>
            <person name="Fukuda S."/>
            <person name="Kanamori-Katayama M."/>
            <person name="Suzuki M."/>
            <person name="Aoki J."/>
            <person name="Arakawa T."/>
            <person name="Iida J."/>
            <person name="Imamura K."/>
            <person name="Itoh M."/>
            <person name="Kato T."/>
            <person name="Kawaji H."/>
            <person name="Kawagashira N."/>
            <person name="Kawashima T."/>
            <person name="Kojima M."/>
            <person name="Kondo S."/>
            <person name="Konno H."/>
            <person name="Nakano K."/>
            <person name="Ninomiya N."/>
            <person name="Nishio T."/>
            <person name="Okada M."/>
            <person name="Plessy C."/>
            <person name="Shibata K."/>
            <person name="Shiraki T."/>
            <person name="Suzuki S."/>
            <person name="Tagami M."/>
            <person name="Waki K."/>
            <person name="Watahiki A."/>
            <person name="Okamura-Oho Y."/>
            <person name="Suzuki H."/>
            <person name="Kawai J."/>
            <person name="Hayashizaki Y."/>
        </authorList>
    </citation>
    <scope>NUCLEOTIDE SEQUENCE [LARGE SCALE MRNA] (ISOFORM 1)</scope>
    <source>
        <strain>C57BL/6J</strain>
        <tissue>Embryonic stem cell</tissue>
    </source>
</reference>
<reference key="2">
    <citation type="journal article" date="2009" name="PLoS Biol.">
        <title>Lineage-specific biology revealed by a finished genome assembly of the mouse.</title>
        <authorList>
            <person name="Church D.M."/>
            <person name="Goodstadt L."/>
            <person name="Hillier L.W."/>
            <person name="Zody M.C."/>
            <person name="Goldstein S."/>
            <person name="She X."/>
            <person name="Bult C.J."/>
            <person name="Agarwala R."/>
            <person name="Cherry J.L."/>
            <person name="DiCuccio M."/>
            <person name="Hlavina W."/>
            <person name="Kapustin Y."/>
            <person name="Meric P."/>
            <person name="Maglott D."/>
            <person name="Birtle Z."/>
            <person name="Marques A.C."/>
            <person name="Graves T."/>
            <person name="Zhou S."/>
            <person name="Teague B."/>
            <person name="Potamousis K."/>
            <person name="Churas C."/>
            <person name="Place M."/>
            <person name="Herschleb J."/>
            <person name="Runnheim R."/>
            <person name="Forrest D."/>
            <person name="Amos-Landgraf J."/>
            <person name="Schwartz D.C."/>
            <person name="Cheng Z."/>
            <person name="Lindblad-Toh K."/>
            <person name="Eichler E.E."/>
            <person name="Ponting C.P."/>
        </authorList>
    </citation>
    <scope>NUCLEOTIDE SEQUENCE [LARGE SCALE GENOMIC DNA]</scope>
    <source>
        <strain>C57BL/6J</strain>
    </source>
</reference>
<reference key="3">
    <citation type="submission" date="2005-07" db="EMBL/GenBank/DDBJ databases">
        <authorList>
            <person name="Mural R.J."/>
            <person name="Adams M.D."/>
            <person name="Myers E.W."/>
            <person name="Smith H.O."/>
            <person name="Venter J.C."/>
        </authorList>
    </citation>
    <scope>NUCLEOTIDE SEQUENCE [LARGE SCALE GENOMIC DNA]</scope>
</reference>
<reference key="4">
    <citation type="journal article" date="2004" name="Genome Res.">
        <title>The status, quality, and expansion of the NIH full-length cDNA project: the Mammalian Gene Collection (MGC).</title>
        <authorList>
            <consortium name="The MGC Project Team"/>
        </authorList>
    </citation>
    <scope>NUCLEOTIDE SEQUENCE [LARGE SCALE MRNA] (ISOFORMS 1 AND 2)</scope>
    <source>
        <strain>C57BL/6J</strain>
        <tissue>Fetal brain</tissue>
    </source>
</reference>
<reference key="5">
    <citation type="journal article" date="2012" name="Mol. Cell">
        <title>MCM8- and MCM9-deficient mice reveal gametogenesis defects and genome instability due to impaired homologous recombination.</title>
        <authorList>
            <person name="Lutzmann M."/>
            <person name="Grey C."/>
            <person name="Traver S."/>
            <person name="Ganier O."/>
            <person name="Maya-Mendoza A."/>
            <person name="Ranisavljevic N."/>
            <person name="Bernex F."/>
            <person name="Nishiyama A."/>
            <person name="Montel N."/>
            <person name="Gavois E."/>
            <person name="Forichon L."/>
            <person name="de Massy B."/>
            <person name="Mechali M."/>
        </authorList>
    </citation>
    <scope>FUNCTION</scope>
    <scope>IDENTIFICATION IN THE MCM8-MCM9 COMPLEX</scope>
    <scope>DISRUPTION PHENOTYPE</scope>
</reference>
<name>MCM8_MOUSE</name>
<proteinExistence type="evidence at protein level"/>
<comment type="function">
    <text evidence="1 3">Component of the MCM8-MCM9 complex, a complex involved in the repair of double-stranded DNA breaks (DBSs) and DNA interstrand cross-links (ICLs) by homologous recombination (HR). Required for DNA resection by the MRE11-RAD50-NBN/NBS1 (MRN) complex by recruiting the MRN complex to the repair site and by promoting the complex nuclease activity. Probably by regulating the localization of the MNR complex, indirectly regulates the recruitment of downstream effector RAD51 to DNA damage sites including DBSs and ICLs. The MCM8-MCM9 complex is dispensable for DNA replication and S phase progression. However, may play a non-essential for DNA replication: may be involved in the activation of the prereplicative complex (pre-RC) during G(1) phase by recruiting CDC6 to the origin recognition complex (ORC) (By similarity). Probably by regulating HR, plays a key role during gametogenesis (PubMed:22771120). Stabilizes MCM9 protein (By similarity).</text>
</comment>
<comment type="catalytic activity">
    <reaction evidence="1">
        <text>ATP + H2O = ADP + phosphate + H(+)</text>
        <dbReference type="Rhea" id="RHEA:13065"/>
        <dbReference type="ChEBI" id="CHEBI:15377"/>
        <dbReference type="ChEBI" id="CHEBI:15378"/>
        <dbReference type="ChEBI" id="CHEBI:30616"/>
        <dbReference type="ChEBI" id="CHEBI:43474"/>
        <dbReference type="ChEBI" id="CHEBI:456216"/>
        <dbReference type="EC" id="3.6.4.12"/>
    </reaction>
</comment>
<comment type="subunit">
    <text evidence="1">Component of the MCM8-MCM9 complex, which forms a hexamer composed of MCM8 and MCM9. Interacts with the DNA mismatch repair (MMR) complex composed at least of MSH2, MSH3, MSH6, PMS1 and MLH1. Interacts with RAD51; the interaction recruits RAD51 to DNA damage sites. Interacts with the MRN complex composed of MRE11, RAD50 and NBN/NBS1. Interacts with CDC6 and ORC2. Interacts with HROB; the interaction recruits the MCM8-MCM9 complex to DNA damage sites (By similarity).</text>
</comment>
<comment type="subcellular location">
    <subcellularLocation>
        <location evidence="1">Nucleus</location>
    </subcellularLocation>
    <subcellularLocation>
        <location evidence="1">Chromosome</location>
    </subcellularLocation>
    <text evidence="1">Localizes to nuclear foci. Localizes to double-stranded DNA breaks. Binds chromatin throughout the cell cycle.</text>
</comment>
<comment type="alternative products">
    <event type="alternative splicing"/>
    <isoform>
        <id>Q9CWV1-1</id>
        <name>1</name>
        <sequence type="displayed"/>
    </isoform>
    <isoform>
        <id>Q9CWV1-2</id>
        <name>2</name>
        <sequence type="described" ref="VSP_015786"/>
    </isoform>
</comment>
<comment type="disruption phenotype">
    <text evidence="3">Mice are viable but are sterile due to defects in double-strand break repair during gametogenesis. Testes are apoptotic and contain spermatocytes that have persistent DNA damage and unsynapsed chromosomes due to defective homologous recombinatio. Ovaries are characterized by an early block of follicle development, and they later develop tumors.</text>
</comment>
<comment type="similarity">
    <text evidence="5">Belongs to the MCM family.</text>
</comment>
<sequence>MSGAYRGRGFGRGRFQSWKRGRGGGNFSGRWRERENRVDLNEASGKHASAQASQPLLQQSTLDQFIPYKGWKLYFSEVYSNNSPFIEKIQAFEKFFTRHIDLYDKDEIERKGSILVDFKELTKADEITNLIPDIENALRDAPEKTLACMGLAIHQVLTKDLERHAAELQAQEGLSNGGETMVNVPHIYARVYNYEPLTHLKNIRATCYGKYISIRGTVVRVSNIKPLCTNMAFQCAACGEIQSFPLPDGKYTLPTKCPVPACRGRSFAPLRSSPLTVTLDWQLIKIQELMSDAQREAGRIPRTIECELVHDLVDSCVPGDTVTVTGIVKVSNSEEGSRNKNDKCMFLLYIEANSVSNSKGPKAQTAEDGCKHGTLMEFSLKDLYAIREIQAEENLLKLVVNSLCPVIFGHELVKAGLTLALFGGSQKYADDKNRIPIRGDPHVLIVGDPGLGKSQMLQAACNVAPRGVYVCGNTTTSSGLTVTLSKDSSSGDFALEAGALVLGDQGICGIDEFDKMGNQHQALLEAMEQQSISLAKAGVVCSLPARTSIIAAANPVGGHYNKARTVSENLKMGSALLSRFDLVFILLDTPNEQHDHLLSEHVIAIRAGKQKAVSSATVTRVLSQDSNTSVLEVVSEKPLSERLKVAPGEQTDPIPHQLLRKYIGYARQYVHPRLSTDAAQALQDFYLELRKQSQRVGSSPITTRQLESLIRLTEARARLELREEATREDAEDIIEIMKHSMLGTYSDEFGNLDFERSQHGSGMSNRSTAKRFISALNSIAERTYNNIFQYHQLRQIAKELNIQVADFENFIGSLNDQGYLLKKGPKIYQLQTM</sequence>
<gene>
    <name type="primary">Mcm8</name>
</gene>
<evidence type="ECO:0000250" key="1">
    <source>
        <dbReference type="UniProtKB" id="Q9UJA3"/>
    </source>
</evidence>
<evidence type="ECO:0000255" key="2"/>
<evidence type="ECO:0000269" key="3">
    <source>
    </source>
</evidence>
<evidence type="ECO:0000303" key="4">
    <source>
    </source>
</evidence>
<evidence type="ECO:0000305" key="5"/>
<keyword id="KW-0025">Alternative splicing</keyword>
<keyword id="KW-0067">ATP-binding</keyword>
<keyword id="KW-0131">Cell cycle</keyword>
<keyword id="KW-0158">Chromosome</keyword>
<keyword id="KW-0227">DNA damage</keyword>
<keyword id="KW-0234">DNA repair</keyword>
<keyword id="KW-0235">DNA replication</keyword>
<keyword id="KW-0238">DNA-binding</keyword>
<keyword id="KW-0347">Helicase</keyword>
<keyword id="KW-0378">Hydrolase</keyword>
<keyword id="KW-0547">Nucleotide-binding</keyword>
<keyword id="KW-0539">Nucleus</keyword>
<keyword id="KW-0597">Phosphoprotein</keyword>
<keyword id="KW-1185">Reference proteome</keyword>
<dbReference type="EC" id="3.6.4.12" evidence="1"/>
<dbReference type="EMBL" id="AK010365">
    <property type="protein sequence ID" value="BAB26885.1"/>
    <property type="molecule type" value="mRNA"/>
</dbReference>
<dbReference type="EMBL" id="AK133858">
    <property type="protein sequence ID" value="BAE21892.1"/>
    <property type="molecule type" value="mRNA"/>
</dbReference>
<dbReference type="EMBL" id="AL929562">
    <property type="status" value="NOT_ANNOTATED_CDS"/>
    <property type="molecule type" value="Genomic_DNA"/>
</dbReference>
<dbReference type="EMBL" id="CH466519">
    <property type="protein sequence ID" value="EDL28362.1"/>
    <property type="molecule type" value="Genomic_DNA"/>
</dbReference>
<dbReference type="EMBL" id="BC046780">
    <property type="protein sequence ID" value="AAH46780.1"/>
    <property type="molecule type" value="mRNA"/>
</dbReference>
<dbReference type="EMBL" id="BC052070">
    <property type="protein sequence ID" value="AAH52070.1"/>
    <property type="molecule type" value="mRNA"/>
</dbReference>
<dbReference type="CCDS" id="CCDS16778.1">
    <molecule id="Q9CWV1-2"/>
</dbReference>
<dbReference type="CCDS" id="CCDS71152.1">
    <molecule id="Q9CWV1-1"/>
</dbReference>
<dbReference type="RefSeq" id="NP_001277983.1">
    <molecule id="Q9CWV1-1"/>
    <property type="nucleotide sequence ID" value="NM_001291054.2"/>
</dbReference>
<dbReference type="RefSeq" id="NP_079952.2">
    <molecule id="Q9CWV1-2"/>
    <property type="nucleotide sequence ID" value="NM_025676.4"/>
</dbReference>
<dbReference type="SMR" id="Q9CWV1"/>
<dbReference type="BioGRID" id="211611">
    <property type="interactions" value="1"/>
</dbReference>
<dbReference type="FunCoup" id="Q9CWV1">
    <property type="interactions" value="1214"/>
</dbReference>
<dbReference type="STRING" id="10090.ENSMUSP00000028831"/>
<dbReference type="iPTMnet" id="Q9CWV1"/>
<dbReference type="PhosphoSitePlus" id="Q9CWV1"/>
<dbReference type="PaxDb" id="10090-ENSMUSP00000066842"/>
<dbReference type="PeptideAtlas" id="Q9CWV1"/>
<dbReference type="ProteomicsDB" id="295711">
    <molecule id="Q9CWV1-1"/>
</dbReference>
<dbReference type="ProteomicsDB" id="295712">
    <molecule id="Q9CWV1-2"/>
</dbReference>
<dbReference type="Pumba" id="Q9CWV1"/>
<dbReference type="DNASU" id="66634"/>
<dbReference type="Ensembl" id="ENSMUST00000028831.15">
    <molecule id="Q9CWV1-1"/>
    <property type="protein sequence ID" value="ENSMUSP00000028831.9"/>
    <property type="gene ID" value="ENSMUSG00000027353.15"/>
</dbReference>
<dbReference type="Ensembl" id="ENSMUST00000066559.6">
    <molecule id="Q9CWV1-2"/>
    <property type="protein sequence ID" value="ENSMUSP00000066842.6"/>
    <property type="gene ID" value="ENSMUSG00000027353.15"/>
</dbReference>
<dbReference type="GeneID" id="66634"/>
<dbReference type="KEGG" id="mmu:66634"/>
<dbReference type="UCSC" id="uc008mni.2">
    <molecule id="Q9CWV1-2"/>
    <property type="organism name" value="mouse"/>
</dbReference>
<dbReference type="UCSC" id="uc008mnj.2">
    <molecule id="Q9CWV1-1"/>
    <property type="organism name" value="mouse"/>
</dbReference>
<dbReference type="AGR" id="MGI:1913884"/>
<dbReference type="CTD" id="84515"/>
<dbReference type="MGI" id="MGI:1913884">
    <property type="gene designation" value="Mcm8"/>
</dbReference>
<dbReference type="VEuPathDB" id="HostDB:ENSMUSG00000027353"/>
<dbReference type="eggNOG" id="KOG0480">
    <property type="taxonomic scope" value="Eukaryota"/>
</dbReference>
<dbReference type="GeneTree" id="ENSGT01110000267230"/>
<dbReference type="HOGENOM" id="CLU_000995_7_2_1"/>
<dbReference type="InParanoid" id="Q9CWV1"/>
<dbReference type="OMA" id="THTVDWQ"/>
<dbReference type="OrthoDB" id="422555at2759"/>
<dbReference type="PhylomeDB" id="Q9CWV1"/>
<dbReference type="TreeFam" id="TF323155"/>
<dbReference type="Reactome" id="R-MMU-176187">
    <property type="pathway name" value="Activation of ATR in response to replication stress"/>
</dbReference>
<dbReference type="Reactome" id="R-MMU-68689">
    <property type="pathway name" value="CDC6 association with the ORC:origin complex"/>
</dbReference>
<dbReference type="Reactome" id="R-MMU-68949">
    <property type="pathway name" value="Orc1 removal from chromatin"/>
</dbReference>
<dbReference type="Reactome" id="R-MMU-68962">
    <property type="pathway name" value="Activation of the pre-replicative complex"/>
</dbReference>
<dbReference type="BioGRID-ORCS" id="66634">
    <property type="hits" value="14 hits in 115 CRISPR screens"/>
</dbReference>
<dbReference type="ChiTaRS" id="Mcm8">
    <property type="organism name" value="mouse"/>
</dbReference>
<dbReference type="PRO" id="PR:Q9CWV1"/>
<dbReference type="Proteomes" id="UP000000589">
    <property type="component" value="Chromosome 2"/>
</dbReference>
<dbReference type="RNAct" id="Q9CWV1">
    <property type="molecule type" value="protein"/>
</dbReference>
<dbReference type="Bgee" id="ENSMUSG00000027353">
    <property type="expression patterns" value="Expressed in embryonic post-anal tail and 158 other cell types or tissues"/>
</dbReference>
<dbReference type="GO" id="GO:0005694">
    <property type="term" value="C:chromosome"/>
    <property type="evidence" value="ECO:0007669"/>
    <property type="project" value="UniProtKB-SubCell"/>
</dbReference>
<dbReference type="GO" id="GO:0097362">
    <property type="term" value="C:MCM8-MCM9 complex"/>
    <property type="evidence" value="ECO:0000314"/>
    <property type="project" value="UniProtKB"/>
</dbReference>
<dbReference type="GO" id="GO:0005634">
    <property type="term" value="C:nucleus"/>
    <property type="evidence" value="ECO:0007669"/>
    <property type="project" value="UniProtKB-SubCell"/>
</dbReference>
<dbReference type="GO" id="GO:0005524">
    <property type="term" value="F:ATP binding"/>
    <property type="evidence" value="ECO:0007669"/>
    <property type="project" value="UniProtKB-KW"/>
</dbReference>
<dbReference type="GO" id="GO:0016887">
    <property type="term" value="F:ATP hydrolysis activity"/>
    <property type="evidence" value="ECO:0007669"/>
    <property type="project" value="InterPro"/>
</dbReference>
<dbReference type="GO" id="GO:0003682">
    <property type="term" value="F:chromatin binding"/>
    <property type="evidence" value="ECO:0007669"/>
    <property type="project" value="Ensembl"/>
</dbReference>
<dbReference type="GO" id="GO:0003677">
    <property type="term" value="F:DNA binding"/>
    <property type="evidence" value="ECO:0007669"/>
    <property type="project" value="UniProtKB-KW"/>
</dbReference>
<dbReference type="GO" id="GO:0019899">
    <property type="term" value="F:enzyme binding"/>
    <property type="evidence" value="ECO:0007669"/>
    <property type="project" value="Ensembl"/>
</dbReference>
<dbReference type="GO" id="GO:0004386">
    <property type="term" value="F:helicase activity"/>
    <property type="evidence" value="ECO:0007669"/>
    <property type="project" value="UniProtKB-KW"/>
</dbReference>
<dbReference type="GO" id="GO:0032406">
    <property type="term" value="F:MutLbeta complex binding"/>
    <property type="evidence" value="ECO:0007669"/>
    <property type="project" value="Ensembl"/>
</dbReference>
<dbReference type="GO" id="GO:0032407">
    <property type="term" value="F:MutSalpha complex binding"/>
    <property type="evidence" value="ECO:0007669"/>
    <property type="project" value="Ensembl"/>
</dbReference>
<dbReference type="GO" id="GO:0032408">
    <property type="term" value="F:MutSbeta complex binding"/>
    <property type="evidence" value="ECO:0007669"/>
    <property type="project" value="Ensembl"/>
</dbReference>
<dbReference type="GO" id="GO:0006974">
    <property type="term" value="P:DNA damage response"/>
    <property type="evidence" value="ECO:0000315"/>
    <property type="project" value="UniProtKB"/>
</dbReference>
<dbReference type="GO" id="GO:0006260">
    <property type="term" value="P:DNA replication"/>
    <property type="evidence" value="ECO:0007669"/>
    <property type="project" value="UniProtKB-KW"/>
</dbReference>
<dbReference type="GO" id="GO:0000724">
    <property type="term" value="P:double-strand break repair via homologous recombination"/>
    <property type="evidence" value="ECO:0000315"/>
    <property type="project" value="UniProtKB"/>
</dbReference>
<dbReference type="GO" id="GO:0007292">
    <property type="term" value="P:female gamete generation"/>
    <property type="evidence" value="ECO:0000315"/>
    <property type="project" value="UniProtKB"/>
</dbReference>
<dbReference type="GO" id="GO:0048232">
    <property type="term" value="P:male gamete generation"/>
    <property type="evidence" value="ECO:0000315"/>
    <property type="project" value="UniProtKB"/>
</dbReference>
<dbReference type="GO" id="GO:0071168">
    <property type="term" value="P:protein localization to chromatin"/>
    <property type="evidence" value="ECO:0007669"/>
    <property type="project" value="Ensembl"/>
</dbReference>
<dbReference type="GO" id="GO:0050821">
    <property type="term" value="P:protein stabilization"/>
    <property type="evidence" value="ECO:0007669"/>
    <property type="project" value="Ensembl"/>
</dbReference>
<dbReference type="GO" id="GO:0036298">
    <property type="term" value="P:recombinational interstrand cross-link repair"/>
    <property type="evidence" value="ECO:0007669"/>
    <property type="project" value="Ensembl"/>
</dbReference>
<dbReference type="CDD" id="cd17759">
    <property type="entry name" value="MCM8"/>
    <property type="match status" value="1"/>
</dbReference>
<dbReference type="CDD" id="cd22247">
    <property type="entry name" value="MCM8_WHD"/>
    <property type="match status" value="1"/>
</dbReference>
<dbReference type="FunFam" id="2.20.28.10:FF:000007">
    <property type="entry name" value="DNA helicase MCM8 isoform X1"/>
    <property type="match status" value="1"/>
</dbReference>
<dbReference type="FunFam" id="2.40.50.140:FF:000487">
    <property type="entry name" value="Minichromosome maintenance 8 homologous recombination repair factor"/>
    <property type="match status" value="1"/>
</dbReference>
<dbReference type="Gene3D" id="2.20.28.10">
    <property type="match status" value="1"/>
</dbReference>
<dbReference type="Gene3D" id="2.40.50.140">
    <property type="entry name" value="Nucleic acid-binding proteins"/>
    <property type="match status" value="1"/>
</dbReference>
<dbReference type="Gene3D" id="3.40.50.300">
    <property type="entry name" value="P-loop containing nucleotide triphosphate hydrolases"/>
    <property type="match status" value="1"/>
</dbReference>
<dbReference type="InterPro" id="IPR003593">
    <property type="entry name" value="AAA+_ATPase"/>
</dbReference>
<dbReference type="InterPro" id="IPR031327">
    <property type="entry name" value="MCM"/>
</dbReference>
<dbReference type="InterPro" id="IPR056875">
    <property type="entry name" value="MCM8/REC_WHD"/>
</dbReference>
<dbReference type="InterPro" id="IPR001208">
    <property type="entry name" value="MCM_dom"/>
</dbReference>
<dbReference type="InterPro" id="IPR041562">
    <property type="entry name" value="MCM_lid"/>
</dbReference>
<dbReference type="InterPro" id="IPR033762">
    <property type="entry name" value="MCM_OB"/>
</dbReference>
<dbReference type="InterPro" id="IPR012340">
    <property type="entry name" value="NA-bd_OB-fold"/>
</dbReference>
<dbReference type="InterPro" id="IPR027417">
    <property type="entry name" value="P-loop_NTPase"/>
</dbReference>
<dbReference type="PANTHER" id="PTHR11630:SF47">
    <property type="entry name" value="DNA HELICASE MCM8"/>
    <property type="match status" value="1"/>
</dbReference>
<dbReference type="PANTHER" id="PTHR11630">
    <property type="entry name" value="DNA REPLICATION LICENSING FACTOR MCM FAMILY MEMBER"/>
    <property type="match status" value="1"/>
</dbReference>
<dbReference type="Pfam" id="PF00493">
    <property type="entry name" value="MCM"/>
    <property type="match status" value="1"/>
</dbReference>
<dbReference type="Pfam" id="PF17855">
    <property type="entry name" value="MCM_lid"/>
    <property type="match status" value="1"/>
</dbReference>
<dbReference type="Pfam" id="PF17207">
    <property type="entry name" value="MCM_OB"/>
    <property type="match status" value="1"/>
</dbReference>
<dbReference type="Pfam" id="PF25051">
    <property type="entry name" value="WHD_MCM8"/>
    <property type="match status" value="1"/>
</dbReference>
<dbReference type="PRINTS" id="PR01657">
    <property type="entry name" value="MCMFAMILY"/>
</dbReference>
<dbReference type="SMART" id="SM00382">
    <property type="entry name" value="AAA"/>
    <property type="match status" value="1"/>
</dbReference>
<dbReference type="SMART" id="SM00350">
    <property type="entry name" value="MCM"/>
    <property type="match status" value="1"/>
</dbReference>
<dbReference type="SUPFAM" id="SSF50249">
    <property type="entry name" value="Nucleic acid-binding proteins"/>
    <property type="match status" value="1"/>
</dbReference>
<dbReference type="SUPFAM" id="SSF52540">
    <property type="entry name" value="P-loop containing nucleoside triphosphate hydrolases"/>
    <property type="match status" value="1"/>
</dbReference>
<dbReference type="PROSITE" id="PS50051">
    <property type="entry name" value="MCM_2"/>
    <property type="match status" value="1"/>
</dbReference>
<feature type="chain" id="PRO_0000194126" description="DNA helicase MCM8">
    <location>
        <begin position="1"/>
        <end position="833"/>
    </location>
</feature>
<feature type="domain" description="MCM">
    <location>
        <begin position="395"/>
        <end position="602"/>
    </location>
</feature>
<feature type="binding site" evidence="2">
    <location>
        <begin position="447"/>
        <end position="454"/>
    </location>
    <ligand>
        <name>ATP</name>
        <dbReference type="ChEBI" id="CHEBI:30616"/>
    </ligand>
</feature>
<feature type="modified residue" description="Phosphoserine" evidence="1">
    <location>
        <position position="623"/>
    </location>
</feature>
<feature type="splice variant" id="VSP_015786" description="In isoform 2." evidence="4">
    <location>
        <begin position="50"/>
        <end position="77"/>
    </location>
</feature>
<feature type="sequence conflict" description="In Ref. 1; BAE21892." evidence="5" ref="1">
    <original>S</original>
    <variation>Y</variation>
    <location>
        <position position="379"/>
    </location>
</feature>
<feature type="sequence conflict" description="In Ref. 4; AAH46780." evidence="5" ref="4">
    <original>I</original>
    <variation>V</variation>
    <location>
        <position position="550"/>
    </location>
</feature>
<feature type="sequence conflict" description="In Ref. 1; BAB26885." evidence="5" ref="1">
    <original>F</original>
    <variation>L</variation>
    <location>
        <position position="749"/>
    </location>
</feature>
<protein>
    <recommendedName>
        <fullName>DNA helicase MCM8</fullName>
        <ecNumber evidence="1">3.6.4.12</ecNumber>
    </recommendedName>
    <alternativeName>
        <fullName>Minichromosome maintenance 8</fullName>
    </alternativeName>
</protein>
<accession>Q9CWV1</accession>
<accession>A2AVM8</accession>
<accession>A2AVM9</accession>
<accession>Q3UZG5</accession>
<accession>Q80US2</accession>
<accession>Q80VI0</accession>